<keyword id="KW-0445">Lipid transport</keyword>
<keyword id="KW-0964">Secreted</keyword>
<keyword id="KW-0732">Signal</keyword>
<keyword id="KW-0813">Transport</keyword>
<reference key="1">
    <citation type="journal article" date="2018" name="Curr. Biol.">
        <title>Genomic Analysis of Demographic History and Ecological Niche Modeling in the Endangered Sumatran Rhinoceros Dicerorhinus sumatrensis.</title>
        <authorList>
            <person name="Mays H.L. Jr."/>
            <person name="Hung C.M."/>
            <person name="Shaner P.J."/>
            <person name="Denvir J."/>
            <person name="Justice M."/>
            <person name="Yang S.F."/>
            <person name="Roth T.L."/>
            <person name="Oehler D.A."/>
            <person name="Fan J."/>
            <person name="Rekulapally S."/>
            <person name="Primerano D.A."/>
        </authorList>
    </citation>
    <scope>NUCLEOTIDE SEQUENCE [LARGE SCALE GENOMIC DNA]</scope>
</reference>
<reference key="2">
    <citation type="unpublished observations" date="2021-01">
        <authorList>
            <person name="Puppione D.L."/>
        </authorList>
    </citation>
    <scope>IDENTIFICATION</scope>
</reference>
<organism>
    <name type="scientific">Dicerorhinus sumatrensis sumatrensis</name>
    <name type="common">Western Sumatran rhinoceros</name>
    <dbReference type="NCBI Taxonomy" id="310712"/>
    <lineage>
        <taxon>Eukaryota</taxon>
        <taxon>Metazoa</taxon>
        <taxon>Chordata</taxon>
        <taxon>Craniata</taxon>
        <taxon>Vertebrata</taxon>
        <taxon>Euteleostomi</taxon>
        <taxon>Mammalia</taxon>
        <taxon>Eutheria</taxon>
        <taxon>Laurasiatheria</taxon>
        <taxon>Perissodactyla</taxon>
        <taxon>Rhinocerotidae</taxon>
        <taxon>Dicerorhinus</taxon>
    </lineage>
</organism>
<accession>P0DTG9</accession>
<feature type="signal peptide" evidence="2">
    <location>
        <begin position="1"/>
        <end position="27"/>
    </location>
</feature>
<feature type="chain" id="PRO_0000452523" description="Apolipoprotein C-IV">
    <location>
        <begin position="28"/>
        <end position="127"/>
    </location>
</feature>
<comment type="function">
    <text evidence="1">May participate in lipoprotein metabolism.</text>
</comment>
<comment type="subcellular location">
    <subcellularLocation>
        <location evidence="1">Secreted</location>
    </subcellularLocation>
</comment>
<comment type="similarity">
    <text evidence="3">Belongs to the apolipoprotein C4 family.</text>
</comment>
<proteinExistence type="inferred from homology"/>
<protein>
    <recommendedName>
        <fullName>Apolipoprotein C-IV</fullName>
        <shortName>Apo-CIV</shortName>
        <shortName>ApoC-IV</shortName>
    </recommendedName>
    <alternativeName>
        <fullName>Apolipoprotein C4</fullName>
    </alternativeName>
</protein>
<evidence type="ECO:0000250" key="1"/>
<evidence type="ECO:0000255" key="2"/>
<evidence type="ECO:0000305" key="3"/>
<dbReference type="EMBL" id="PEKH011059302">
    <property type="status" value="NOT_ANNOTATED_CDS"/>
    <property type="molecule type" value="Genomic_DNA"/>
</dbReference>
<dbReference type="GO" id="GO:0034364">
    <property type="term" value="C:high-density lipoprotein particle"/>
    <property type="evidence" value="ECO:0007669"/>
    <property type="project" value="TreeGrafter"/>
</dbReference>
<dbReference type="GO" id="GO:0034361">
    <property type="term" value="C:very-low-density lipoprotein particle"/>
    <property type="evidence" value="ECO:0007669"/>
    <property type="project" value="TreeGrafter"/>
</dbReference>
<dbReference type="GO" id="GO:0006869">
    <property type="term" value="P:lipid transport"/>
    <property type="evidence" value="ECO:0007669"/>
    <property type="project" value="UniProtKB-KW"/>
</dbReference>
<dbReference type="GO" id="GO:0010890">
    <property type="term" value="P:positive regulation of triglyceride storage"/>
    <property type="evidence" value="ECO:0007669"/>
    <property type="project" value="TreeGrafter"/>
</dbReference>
<dbReference type="GO" id="GO:0070328">
    <property type="term" value="P:triglyceride homeostasis"/>
    <property type="evidence" value="ECO:0007669"/>
    <property type="project" value="TreeGrafter"/>
</dbReference>
<dbReference type="InterPro" id="IPR028120">
    <property type="entry name" value="APOC4"/>
</dbReference>
<dbReference type="PANTHER" id="PTHR32288">
    <property type="entry name" value="APOLIPOPROTEIN C-IV"/>
    <property type="match status" value="1"/>
</dbReference>
<dbReference type="PANTHER" id="PTHR32288:SF0">
    <property type="entry name" value="APOLIPOPROTEIN C-IV"/>
    <property type="match status" value="1"/>
</dbReference>
<dbReference type="Pfam" id="PF15119">
    <property type="entry name" value="APOC4"/>
    <property type="match status" value="1"/>
</dbReference>
<gene>
    <name type="primary">APOC4</name>
</gene>
<name>APOC4_DICSS</name>
<sequence length="127" mass="14729">MLLPGRRPWALHSFCFYVLVLAWVVACQQEVPTGSPSPPPGRASGLWGLVRGKVKEFMEPLVTKTRERWRWFWGPSAFQGFMQTYYDDHLRDLRPRAQAWLRSSKESLLNKAYNMCPQLLCRDGDQG</sequence>